<organism>
    <name type="scientific">Nautilia profundicola (strain ATCC BAA-1463 / DSM 18972 / AmH)</name>
    <dbReference type="NCBI Taxonomy" id="598659"/>
    <lineage>
        <taxon>Bacteria</taxon>
        <taxon>Pseudomonadati</taxon>
        <taxon>Campylobacterota</taxon>
        <taxon>Epsilonproteobacteria</taxon>
        <taxon>Nautiliales</taxon>
        <taxon>Nautiliaceae</taxon>
        <taxon>Nautilia</taxon>
    </lineage>
</organism>
<protein>
    <recommendedName>
        <fullName evidence="1">Enolase</fullName>
        <ecNumber evidence="1">4.2.1.11</ecNumber>
    </recommendedName>
    <alternativeName>
        <fullName evidence="1">2-phospho-D-glycerate hydro-lyase</fullName>
    </alternativeName>
    <alternativeName>
        <fullName evidence="1">2-phosphoglycerate dehydratase</fullName>
    </alternativeName>
</protein>
<keyword id="KW-0963">Cytoplasm</keyword>
<keyword id="KW-0324">Glycolysis</keyword>
<keyword id="KW-0456">Lyase</keyword>
<keyword id="KW-0460">Magnesium</keyword>
<keyword id="KW-0479">Metal-binding</keyword>
<keyword id="KW-0964">Secreted</keyword>
<sequence>MIFIEDIFADEVLDSRGNPTVRATVTLSDGSRASAIVPSGASTGVNEALELRDGGERYLGKGVLKACENVNTLIANELIGMSPYDQAEIDNIMLELDGTENKSKLGANAILGVSMAVARAAANSLDLPLFRYLGGANALVLPTPMLNIINGGAHADNDVDLQEYMIMPTGFDDFAEALRASSEVYHTLKKLLVADGHNTALGDEGGFAPNFKNNEEPIEYIIKAIEKAGYKPGEEITIALDAASSEFYKDGKYVLAGENKTLSAEELVDYYAYLCGKYPIVSIEDGVAEEDWEGWKILTDKLGDKIQLVGDDLFVTNKKILQKGIELGVANAILIKPNQIGTVSETMQTVRLAQRNNYKTVMSHRSGESEDAFIADFAVALNCGEIKTGAPARGERNAKYNRLLEIARSIAGAEYIGKDLF</sequence>
<reference key="1">
    <citation type="journal article" date="2009" name="PLoS Genet.">
        <title>Adaptations to submarine hydrothermal environments exemplified by the genome of Nautilia profundicola.</title>
        <authorList>
            <person name="Campbell B.J."/>
            <person name="Smith J.L."/>
            <person name="Hanson T.E."/>
            <person name="Klotz M.G."/>
            <person name="Stein L.Y."/>
            <person name="Lee C.K."/>
            <person name="Wu D."/>
            <person name="Robinson J.M."/>
            <person name="Khouri H.M."/>
            <person name="Eisen J.A."/>
            <person name="Cary S.C."/>
        </authorList>
    </citation>
    <scope>NUCLEOTIDE SEQUENCE [LARGE SCALE GENOMIC DNA]</scope>
    <source>
        <strain>ATCC BAA-1463 / DSM 18972 / AmH</strain>
    </source>
</reference>
<dbReference type="EC" id="4.2.1.11" evidence="1"/>
<dbReference type="EMBL" id="CP001279">
    <property type="protein sequence ID" value="ACM92733.1"/>
    <property type="molecule type" value="Genomic_DNA"/>
</dbReference>
<dbReference type="RefSeq" id="WP_015901785.1">
    <property type="nucleotide sequence ID" value="NC_012115.1"/>
</dbReference>
<dbReference type="SMR" id="B9L7U3"/>
<dbReference type="STRING" id="598659.NAMH_0277"/>
<dbReference type="KEGG" id="nam:NAMH_0277"/>
<dbReference type="eggNOG" id="COG0148">
    <property type="taxonomic scope" value="Bacteria"/>
</dbReference>
<dbReference type="HOGENOM" id="CLU_031223_2_1_7"/>
<dbReference type="OrthoDB" id="9804716at2"/>
<dbReference type="UniPathway" id="UPA00109">
    <property type="reaction ID" value="UER00187"/>
</dbReference>
<dbReference type="Proteomes" id="UP000000448">
    <property type="component" value="Chromosome"/>
</dbReference>
<dbReference type="GO" id="GO:0009986">
    <property type="term" value="C:cell surface"/>
    <property type="evidence" value="ECO:0007669"/>
    <property type="project" value="UniProtKB-SubCell"/>
</dbReference>
<dbReference type="GO" id="GO:0005576">
    <property type="term" value="C:extracellular region"/>
    <property type="evidence" value="ECO:0007669"/>
    <property type="project" value="UniProtKB-SubCell"/>
</dbReference>
<dbReference type="GO" id="GO:0000015">
    <property type="term" value="C:phosphopyruvate hydratase complex"/>
    <property type="evidence" value="ECO:0007669"/>
    <property type="project" value="InterPro"/>
</dbReference>
<dbReference type="GO" id="GO:0000287">
    <property type="term" value="F:magnesium ion binding"/>
    <property type="evidence" value="ECO:0007669"/>
    <property type="project" value="UniProtKB-UniRule"/>
</dbReference>
<dbReference type="GO" id="GO:0004634">
    <property type="term" value="F:phosphopyruvate hydratase activity"/>
    <property type="evidence" value="ECO:0007669"/>
    <property type="project" value="UniProtKB-UniRule"/>
</dbReference>
<dbReference type="GO" id="GO:0006096">
    <property type="term" value="P:glycolytic process"/>
    <property type="evidence" value="ECO:0007669"/>
    <property type="project" value="UniProtKB-UniRule"/>
</dbReference>
<dbReference type="CDD" id="cd03313">
    <property type="entry name" value="enolase"/>
    <property type="match status" value="1"/>
</dbReference>
<dbReference type="FunFam" id="3.30.390.10:FF:000001">
    <property type="entry name" value="Enolase"/>
    <property type="match status" value="1"/>
</dbReference>
<dbReference type="Gene3D" id="3.20.20.120">
    <property type="entry name" value="Enolase-like C-terminal domain"/>
    <property type="match status" value="1"/>
</dbReference>
<dbReference type="Gene3D" id="3.30.390.10">
    <property type="entry name" value="Enolase-like, N-terminal domain"/>
    <property type="match status" value="1"/>
</dbReference>
<dbReference type="HAMAP" id="MF_00318">
    <property type="entry name" value="Enolase"/>
    <property type="match status" value="1"/>
</dbReference>
<dbReference type="InterPro" id="IPR000941">
    <property type="entry name" value="Enolase"/>
</dbReference>
<dbReference type="InterPro" id="IPR036849">
    <property type="entry name" value="Enolase-like_C_sf"/>
</dbReference>
<dbReference type="InterPro" id="IPR029017">
    <property type="entry name" value="Enolase-like_N"/>
</dbReference>
<dbReference type="InterPro" id="IPR020810">
    <property type="entry name" value="Enolase_C"/>
</dbReference>
<dbReference type="InterPro" id="IPR020809">
    <property type="entry name" value="Enolase_CS"/>
</dbReference>
<dbReference type="InterPro" id="IPR020811">
    <property type="entry name" value="Enolase_N"/>
</dbReference>
<dbReference type="NCBIfam" id="TIGR01060">
    <property type="entry name" value="eno"/>
    <property type="match status" value="1"/>
</dbReference>
<dbReference type="PANTHER" id="PTHR11902">
    <property type="entry name" value="ENOLASE"/>
    <property type="match status" value="1"/>
</dbReference>
<dbReference type="PANTHER" id="PTHR11902:SF1">
    <property type="entry name" value="ENOLASE"/>
    <property type="match status" value="1"/>
</dbReference>
<dbReference type="Pfam" id="PF00113">
    <property type="entry name" value="Enolase_C"/>
    <property type="match status" value="1"/>
</dbReference>
<dbReference type="Pfam" id="PF03952">
    <property type="entry name" value="Enolase_N"/>
    <property type="match status" value="1"/>
</dbReference>
<dbReference type="PIRSF" id="PIRSF001400">
    <property type="entry name" value="Enolase"/>
    <property type="match status" value="1"/>
</dbReference>
<dbReference type="PRINTS" id="PR00148">
    <property type="entry name" value="ENOLASE"/>
</dbReference>
<dbReference type="SFLD" id="SFLDF00002">
    <property type="entry name" value="enolase"/>
    <property type="match status" value="1"/>
</dbReference>
<dbReference type="SFLD" id="SFLDG00178">
    <property type="entry name" value="enolase"/>
    <property type="match status" value="1"/>
</dbReference>
<dbReference type="SMART" id="SM01192">
    <property type="entry name" value="Enolase_C"/>
    <property type="match status" value="1"/>
</dbReference>
<dbReference type="SMART" id="SM01193">
    <property type="entry name" value="Enolase_N"/>
    <property type="match status" value="1"/>
</dbReference>
<dbReference type="SUPFAM" id="SSF51604">
    <property type="entry name" value="Enolase C-terminal domain-like"/>
    <property type="match status" value="1"/>
</dbReference>
<dbReference type="SUPFAM" id="SSF54826">
    <property type="entry name" value="Enolase N-terminal domain-like"/>
    <property type="match status" value="1"/>
</dbReference>
<dbReference type="PROSITE" id="PS00164">
    <property type="entry name" value="ENOLASE"/>
    <property type="match status" value="1"/>
</dbReference>
<evidence type="ECO:0000255" key="1">
    <source>
        <dbReference type="HAMAP-Rule" id="MF_00318"/>
    </source>
</evidence>
<name>ENO_NAUPA</name>
<comment type="function">
    <text evidence="1">Catalyzes the reversible conversion of 2-phosphoglycerate (2-PG) into phosphoenolpyruvate (PEP). It is essential for the degradation of carbohydrates via glycolysis.</text>
</comment>
<comment type="catalytic activity">
    <reaction evidence="1">
        <text>(2R)-2-phosphoglycerate = phosphoenolpyruvate + H2O</text>
        <dbReference type="Rhea" id="RHEA:10164"/>
        <dbReference type="ChEBI" id="CHEBI:15377"/>
        <dbReference type="ChEBI" id="CHEBI:58289"/>
        <dbReference type="ChEBI" id="CHEBI:58702"/>
        <dbReference type="EC" id="4.2.1.11"/>
    </reaction>
</comment>
<comment type="cofactor">
    <cofactor evidence="1">
        <name>Mg(2+)</name>
        <dbReference type="ChEBI" id="CHEBI:18420"/>
    </cofactor>
    <text evidence="1">Binds a second Mg(2+) ion via substrate during catalysis.</text>
</comment>
<comment type="pathway">
    <text evidence="1">Carbohydrate degradation; glycolysis; pyruvate from D-glyceraldehyde 3-phosphate: step 4/5.</text>
</comment>
<comment type="subcellular location">
    <subcellularLocation>
        <location evidence="1">Cytoplasm</location>
    </subcellularLocation>
    <subcellularLocation>
        <location evidence="1">Secreted</location>
    </subcellularLocation>
    <subcellularLocation>
        <location evidence="1">Cell surface</location>
    </subcellularLocation>
    <text evidence="1">Fractions of enolase are present in both the cytoplasm and on the cell surface.</text>
</comment>
<comment type="similarity">
    <text evidence="1">Belongs to the enolase family.</text>
</comment>
<proteinExistence type="inferred from homology"/>
<feature type="chain" id="PRO_1000189959" description="Enolase">
    <location>
        <begin position="1"/>
        <end position="421"/>
    </location>
</feature>
<feature type="active site" description="Proton donor" evidence="1">
    <location>
        <position position="204"/>
    </location>
</feature>
<feature type="active site" description="Proton acceptor" evidence="1">
    <location>
        <position position="336"/>
    </location>
</feature>
<feature type="binding site" evidence="1">
    <location>
        <position position="162"/>
    </location>
    <ligand>
        <name>(2R)-2-phosphoglycerate</name>
        <dbReference type="ChEBI" id="CHEBI:58289"/>
    </ligand>
</feature>
<feature type="binding site" evidence="1">
    <location>
        <position position="241"/>
    </location>
    <ligand>
        <name>Mg(2+)</name>
        <dbReference type="ChEBI" id="CHEBI:18420"/>
    </ligand>
</feature>
<feature type="binding site" evidence="1">
    <location>
        <position position="284"/>
    </location>
    <ligand>
        <name>Mg(2+)</name>
        <dbReference type="ChEBI" id="CHEBI:18420"/>
    </ligand>
</feature>
<feature type="binding site" evidence="1">
    <location>
        <position position="311"/>
    </location>
    <ligand>
        <name>Mg(2+)</name>
        <dbReference type="ChEBI" id="CHEBI:18420"/>
    </ligand>
</feature>
<feature type="binding site" evidence="1">
    <location>
        <position position="336"/>
    </location>
    <ligand>
        <name>(2R)-2-phosphoglycerate</name>
        <dbReference type="ChEBI" id="CHEBI:58289"/>
    </ligand>
</feature>
<feature type="binding site" evidence="1">
    <location>
        <position position="365"/>
    </location>
    <ligand>
        <name>(2R)-2-phosphoglycerate</name>
        <dbReference type="ChEBI" id="CHEBI:58289"/>
    </ligand>
</feature>
<feature type="binding site" evidence="1">
    <location>
        <position position="366"/>
    </location>
    <ligand>
        <name>(2R)-2-phosphoglycerate</name>
        <dbReference type="ChEBI" id="CHEBI:58289"/>
    </ligand>
</feature>
<feature type="binding site" evidence="1">
    <location>
        <position position="387"/>
    </location>
    <ligand>
        <name>(2R)-2-phosphoglycerate</name>
        <dbReference type="ChEBI" id="CHEBI:58289"/>
    </ligand>
</feature>
<gene>
    <name evidence="1" type="primary">eno</name>
    <name type="ordered locus">NAMH_0277</name>
</gene>
<accession>B9L7U3</accession>